<protein>
    <recommendedName>
        <fullName evidence="1">Ribosomal RNA large subunit methyltransferase M</fullName>
        <ecNumber evidence="1">2.1.1.186</ecNumber>
    </recommendedName>
    <alternativeName>
        <fullName evidence="1">23S rRNA (cytidine2498-2'-O)-methyltransferase</fullName>
    </alternativeName>
    <alternativeName>
        <fullName evidence="1">23S rRNA 2'-O-ribose methyltransferase RlmM</fullName>
    </alternativeName>
</protein>
<organism>
    <name type="scientific">Histophilus somni (strain 129Pt)</name>
    <name type="common">Haemophilus somnus</name>
    <dbReference type="NCBI Taxonomy" id="205914"/>
    <lineage>
        <taxon>Bacteria</taxon>
        <taxon>Pseudomonadati</taxon>
        <taxon>Pseudomonadota</taxon>
        <taxon>Gammaproteobacteria</taxon>
        <taxon>Pasteurellales</taxon>
        <taxon>Pasteurellaceae</taxon>
        <taxon>Histophilus</taxon>
    </lineage>
</organism>
<name>RLMM_HISS1</name>
<comment type="function">
    <text evidence="1">Catalyzes the 2'-O-methylation at nucleotide C2498 in 23S rRNA.</text>
</comment>
<comment type="catalytic activity">
    <reaction evidence="1">
        <text>cytidine(2498) in 23S rRNA + S-adenosyl-L-methionine = 2'-O-methylcytidine(2498) in 23S rRNA + S-adenosyl-L-homocysteine + H(+)</text>
        <dbReference type="Rhea" id="RHEA:42788"/>
        <dbReference type="Rhea" id="RHEA-COMP:10244"/>
        <dbReference type="Rhea" id="RHEA-COMP:10245"/>
        <dbReference type="ChEBI" id="CHEBI:15378"/>
        <dbReference type="ChEBI" id="CHEBI:57856"/>
        <dbReference type="ChEBI" id="CHEBI:59789"/>
        <dbReference type="ChEBI" id="CHEBI:74495"/>
        <dbReference type="ChEBI" id="CHEBI:82748"/>
        <dbReference type="EC" id="2.1.1.186"/>
    </reaction>
</comment>
<comment type="subunit">
    <text evidence="1">Monomer.</text>
</comment>
<comment type="subcellular location">
    <subcellularLocation>
        <location evidence="1">Cytoplasm</location>
    </subcellularLocation>
</comment>
<comment type="similarity">
    <text evidence="1">Belongs to the class I-like SAM-binding methyltransferase superfamily. RNA methyltransferase RlmE family. RlmM subfamily.</text>
</comment>
<gene>
    <name evidence="1" type="primary">rlmM</name>
    <name type="ordered locus">HS_0496</name>
</gene>
<accession>Q0I256</accession>
<sequence length="361" mass="41837">MNKLALYCRSGFEKELAAEITEKATALGVFGFARVVENSGYVIFECYQIGEADLLARKITFSQLIFARQLIVVSDLISNLSVQDRISPIIEYYRQQEKILNLKQSSDIWVETADTNEAKTLAAFCRKFTVPLRQALRKQGWLQAKNKKSGITLHIFFTQSNSCYIGYSYNNNHAEHIMGIPRLKFPAEAPSRSTLKLEEAILYFIPPNQEATRFNENKYAVDLGACPGGWTYQLVRRGVFVYAVDHGKMATSLHETGRIEHCAEDGFKFRPPKHCKIDWLVCDMVEQPRRIADLISQWLVKGWCKETIFNLKLPMKKRYFEVQQCLRQIEDKLNKQNISFQLQAKHLYHDREEITVYIRLM</sequence>
<keyword id="KW-0963">Cytoplasm</keyword>
<keyword id="KW-0489">Methyltransferase</keyword>
<keyword id="KW-0698">rRNA processing</keyword>
<keyword id="KW-0949">S-adenosyl-L-methionine</keyword>
<keyword id="KW-0808">Transferase</keyword>
<dbReference type="EC" id="2.1.1.186" evidence="1"/>
<dbReference type="EMBL" id="CP000436">
    <property type="protein sequence ID" value="ABI24773.1"/>
    <property type="molecule type" value="Genomic_DNA"/>
</dbReference>
<dbReference type="SMR" id="Q0I256"/>
<dbReference type="KEGG" id="hso:HS_0496"/>
<dbReference type="eggNOG" id="COG2933">
    <property type="taxonomic scope" value="Bacteria"/>
</dbReference>
<dbReference type="HOGENOM" id="CLU_043780_0_0_6"/>
<dbReference type="GO" id="GO:0005737">
    <property type="term" value="C:cytoplasm"/>
    <property type="evidence" value="ECO:0007669"/>
    <property type="project" value="UniProtKB-SubCell"/>
</dbReference>
<dbReference type="GO" id="GO:0008757">
    <property type="term" value="F:S-adenosylmethionine-dependent methyltransferase activity"/>
    <property type="evidence" value="ECO:0007669"/>
    <property type="project" value="UniProtKB-UniRule"/>
</dbReference>
<dbReference type="GO" id="GO:0032259">
    <property type="term" value="P:methylation"/>
    <property type="evidence" value="ECO:0007669"/>
    <property type="project" value="UniProtKB-KW"/>
</dbReference>
<dbReference type="GO" id="GO:0006364">
    <property type="term" value="P:rRNA processing"/>
    <property type="evidence" value="ECO:0007669"/>
    <property type="project" value="UniProtKB-UniRule"/>
</dbReference>
<dbReference type="Gene3D" id="3.30.2300.20">
    <property type="match status" value="1"/>
</dbReference>
<dbReference type="Gene3D" id="3.30.70.2810">
    <property type="match status" value="1"/>
</dbReference>
<dbReference type="Gene3D" id="3.40.50.150">
    <property type="entry name" value="Vaccinia Virus protein VP39"/>
    <property type="match status" value="1"/>
</dbReference>
<dbReference type="HAMAP" id="MF_01551">
    <property type="entry name" value="23SrRNA_methyltr_M"/>
    <property type="match status" value="1"/>
</dbReference>
<dbReference type="InterPro" id="IPR040739">
    <property type="entry name" value="RlmM_FDX"/>
</dbReference>
<dbReference type="InterPro" id="IPR048646">
    <property type="entry name" value="RlmM_THUMP-like"/>
</dbReference>
<dbReference type="InterPro" id="IPR002877">
    <property type="entry name" value="RNA_MeTrfase_FtsJ_dom"/>
</dbReference>
<dbReference type="InterPro" id="IPR011224">
    <property type="entry name" value="rRNA_MeTrfase_M"/>
</dbReference>
<dbReference type="InterPro" id="IPR029063">
    <property type="entry name" value="SAM-dependent_MTases_sf"/>
</dbReference>
<dbReference type="NCBIfam" id="NF008734">
    <property type="entry name" value="PRK11760.1"/>
    <property type="match status" value="1"/>
</dbReference>
<dbReference type="PANTHER" id="PTHR37524">
    <property type="entry name" value="RIBOSOMAL RNA LARGE SUBUNIT METHYLTRANSFERASE M"/>
    <property type="match status" value="1"/>
</dbReference>
<dbReference type="PANTHER" id="PTHR37524:SF2">
    <property type="entry name" value="RIBOSOMAL RNA METHYLTRANSFERASE FTSJ DOMAIN-CONTAINING PROTEIN"/>
    <property type="match status" value="1"/>
</dbReference>
<dbReference type="Pfam" id="PF01728">
    <property type="entry name" value="FtsJ"/>
    <property type="match status" value="1"/>
</dbReference>
<dbReference type="Pfam" id="PF18125">
    <property type="entry name" value="RlmM_FDX"/>
    <property type="match status" value="1"/>
</dbReference>
<dbReference type="Pfam" id="PF21239">
    <property type="entry name" value="RLMM_N"/>
    <property type="match status" value="1"/>
</dbReference>
<dbReference type="PIRSF" id="PIRSF028774">
    <property type="entry name" value="UCP028774"/>
    <property type="match status" value="1"/>
</dbReference>
<dbReference type="SUPFAM" id="SSF53335">
    <property type="entry name" value="S-adenosyl-L-methionine-dependent methyltransferases"/>
    <property type="match status" value="1"/>
</dbReference>
<reference key="1">
    <citation type="journal article" date="2007" name="J. Bacteriol.">
        <title>Complete genome sequence of Haemophilus somnus (Histophilus somni) strain 129Pt and comparison to Haemophilus ducreyi 35000HP and Haemophilus influenzae Rd.</title>
        <authorList>
            <person name="Challacombe J.F."/>
            <person name="Duncan A.J."/>
            <person name="Brettin T.S."/>
            <person name="Bruce D."/>
            <person name="Chertkov O."/>
            <person name="Detter J.C."/>
            <person name="Han C.S."/>
            <person name="Misra M."/>
            <person name="Richardson P."/>
            <person name="Tapia R."/>
            <person name="Thayer N."/>
            <person name="Xie G."/>
            <person name="Inzana T.J."/>
        </authorList>
    </citation>
    <scope>NUCLEOTIDE SEQUENCE [LARGE SCALE GENOMIC DNA]</scope>
    <source>
        <strain>129Pt</strain>
    </source>
</reference>
<proteinExistence type="inferred from homology"/>
<evidence type="ECO:0000255" key="1">
    <source>
        <dbReference type="HAMAP-Rule" id="MF_01551"/>
    </source>
</evidence>
<feature type="chain" id="PRO_0000314518" description="Ribosomal RNA large subunit methyltransferase M">
    <location>
        <begin position="1"/>
        <end position="361"/>
    </location>
</feature>
<feature type="active site" description="Proton acceptor" evidence="1">
    <location>
        <position position="312"/>
    </location>
</feature>
<feature type="binding site" evidence="1">
    <location>
        <position position="193"/>
    </location>
    <ligand>
        <name>S-adenosyl-L-methionine</name>
        <dbReference type="ChEBI" id="CHEBI:59789"/>
    </ligand>
</feature>
<feature type="binding site" evidence="1">
    <location>
        <begin position="226"/>
        <end position="229"/>
    </location>
    <ligand>
        <name>S-adenosyl-L-methionine</name>
        <dbReference type="ChEBI" id="CHEBI:59789"/>
    </ligand>
</feature>
<feature type="binding site" evidence="1">
    <location>
        <position position="245"/>
    </location>
    <ligand>
        <name>S-adenosyl-L-methionine</name>
        <dbReference type="ChEBI" id="CHEBI:59789"/>
    </ligand>
</feature>
<feature type="binding site" evidence="1">
    <location>
        <position position="265"/>
    </location>
    <ligand>
        <name>S-adenosyl-L-methionine</name>
        <dbReference type="ChEBI" id="CHEBI:59789"/>
    </ligand>
</feature>
<feature type="binding site" evidence="1">
    <location>
        <position position="283"/>
    </location>
    <ligand>
        <name>S-adenosyl-L-methionine</name>
        <dbReference type="ChEBI" id="CHEBI:59789"/>
    </ligand>
</feature>